<organism>
    <name type="scientific">Saccharomyces cerevisiae (strain ATCC 204508 / S288c)</name>
    <name type="common">Baker's yeast</name>
    <dbReference type="NCBI Taxonomy" id="559292"/>
    <lineage>
        <taxon>Eukaryota</taxon>
        <taxon>Fungi</taxon>
        <taxon>Dikarya</taxon>
        <taxon>Ascomycota</taxon>
        <taxon>Saccharomycotina</taxon>
        <taxon>Saccharomycetes</taxon>
        <taxon>Saccharomycetales</taxon>
        <taxon>Saccharomycetaceae</taxon>
        <taxon>Saccharomyces</taxon>
    </lineage>
</organism>
<keyword id="KW-0012">Acyltransferase</keyword>
<keyword id="KW-0256">Endoplasmic reticulum</keyword>
<keyword id="KW-0472">Membrane</keyword>
<keyword id="KW-0597">Phosphoprotein</keyword>
<keyword id="KW-1185">Reference proteome</keyword>
<keyword id="KW-0808">Transferase</keyword>
<keyword id="KW-0812">Transmembrane</keyword>
<keyword id="KW-1133">Transmembrane helix</keyword>
<evidence type="ECO:0000250" key="1">
    <source>
        <dbReference type="UniProtKB" id="P35610"/>
    </source>
</evidence>
<evidence type="ECO:0000255" key="2"/>
<evidence type="ECO:0000256" key="3">
    <source>
        <dbReference type="SAM" id="MobiDB-lite"/>
    </source>
</evidence>
<evidence type="ECO:0000269" key="4">
    <source>
    </source>
</evidence>
<evidence type="ECO:0000269" key="5">
    <source>
    </source>
</evidence>
<evidence type="ECO:0000303" key="6">
    <source>
    </source>
</evidence>
<evidence type="ECO:0000305" key="7"/>
<evidence type="ECO:0007744" key="8">
    <source>
    </source>
</evidence>
<evidence type="ECO:0007744" key="9">
    <source>
    </source>
</evidence>
<evidence type="ECO:0007744" key="10">
    <source>
    </source>
</evidence>
<evidence type="ECO:0007744" key="11">
    <source>
    </source>
</evidence>
<feature type="chain" id="PRO_0000207648" description="Sterol O-acyltransferase 1">
    <location>
        <begin position="1"/>
        <end position="610"/>
    </location>
</feature>
<feature type="transmembrane region" description="Helical" evidence="2">
    <location>
        <begin position="182"/>
        <end position="202"/>
    </location>
</feature>
<feature type="transmembrane region" description="Helical" evidence="2">
    <location>
        <begin position="229"/>
        <end position="249"/>
    </location>
</feature>
<feature type="transmembrane region" description="Helical" evidence="2">
    <location>
        <begin position="264"/>
        <end position="284"/>
    </location>
</feature>
<feature type="transmembrane region" description="Helical" evidence="2">
    <location>
        <begin position="371"/>
        <end position="391"/>
    </location>
</feature>
<feature type="transmembrane region" description="Helical" evidence="2">
    <location>
        <begin position="409"/>
        <end position="429"/>
    </location>
</feature>
<feature type="transmembrane region" description="Helical" evidence="2">
    <location>
        <begin position="535"/>
        <end position="555"/>
    </location>
</feature>
<feature type="transmembrane region" description="Helical" evidence="2">
    <location>
        <begin position="590"/>
        <end position="610"/>
    </location>
</feature>
<feature type="region of interest" description="Disordered" evidence="3">
    <location>
        <begin position="41"/>
        <end position="81"/>
    </location>
</feature>
<feature type="short sequence motif" description="FYXDWWN motif" evidence="1">
    <location>
        <begin position="491"/>
        <end position="497"/>
    </location>
</feature>
<feature type="compositionally biased region" description="Basic and acidic residues" evidence="3">
    <location>
        <begin position="67"/>
        <end position="76"/>
    </location>
</feature>
<feature type="active site" evidence="1">
    <location>
        <position position="547"/>
    </location>
</feature>
<feature type="modified residue" description="Phosphoserine" evidence="8">
    <location>
        <position position="21"/>
    </location>
</feature>
<feature type="modified residue" description="Phosphoserine" evidence="9 10 11">
    <location>
        <position position="45"/>
    </location>
</feature>
<comment type="function">
    <text evidence="4 5">Sterol O-acyltransferase that catalyzes the formation of stery esters.</text>
</comment>
<comment type="catalytic activity">
    <reaction evidence="4">
        <text>lanosterol + an acyl-CoA = lanosteryl ester + CoA</text>
        <dbReference type="Rhea" id="RHEA:33479"/>
        <dbReference type="ChEBI" id="CHEBI:16521"/>
        <dbReference type="ChEBI" id="CHEBI:52394"/>
        <dbReference type="ChEBI" id="CHEBI:57287"/>
        <dbReference type="ChEBI" id="CHEBI:58342"/>
    </reaction>
    <physiologicalReaction direction="left-to-right" evidence="4">
        <dbReference type="Rhea" id="RHEA:33480"/>
    </physiologicalReaction>
</comment>
<comment type="subcellular location">
    <subcellularLocation>
        <location evidence="4">Endoplasmic reticulum membrane</location>
        <topology evidence="2">Multi-pass membrane protein</topology>
    </subcellularLocation>
</comment>
<comment type="similarity">
    <text evidence="7">Belongs to the membrane-bound acyltransferase family. Sterol o-acyltransferase subfamily.</text>
</comment>
<protein>
    <recommendedName>
        <fullName>Sterol O-acyltransferase 1</fullName>
        <ecNumber evidence="4">2.3.1.-</ecNumber>
    </recommendedName>
    <alternativeName>
        <fullName>Sterol-ester synthase 1</fullName>
    </alternativeName>
</protein>
<sequence length="610" mass="71613">MTETKDLLQDEEFLKIRRLNSAEANKRHSVTYDNVILPQESMEVSPRSSTTSLVEPVESTEGVESTEAERVAGKQEQEEEYPVDAHMQKYLSHLKSKSRSRFHRKDASKYVSFFGDVSFDPRPTLLDSAINVPFQTTFKGPVLEKQLKNLQLTKTKTKATVKTTVKTTEKTDKADAPPGEKLESNFSGIYVFAWMFLGWIAIRCCTDYYASYGSAWNKLEIVQYMTTDLFTIAMLDLAMFLCTFFVVFVHWLVKKRIINWKWTGFVAVSIFELAFIPVTFPIYVYYFDFNWVTRIFLFLHSVVFVMKSHSFAFYNGYLWDIKQELEYSSKQLQKYKESLSPETREILQKSCDFCLFELNYQTKDNDFPNNISCSNFFMFCLFPVLVYQINYPRTSRIRWRYVLEKVCAIIGTIFLMMVTAQFFMHPVAMRCIQFHNTPTFGGWIPATQEWFHLLFDMIPGFTVLYMLTFYMIWDALLNCVAELTRFADRYFYGDWWNCVSFEEFSRIWNVPVHKFLLRHVYHSSMGALHLSKSQATLFTFFLSAVFHEMAMFAIFRRVRGYLFMFQLSQFVWTALSNTKFLRARPQLSNVVFSFGVCSGPSIIMTLYLTL</sequence>
<accession>P25628</accession>
<accession>D6VR57</accession>
<reference key="1">
    <citation type="journal article" date="1992" name="Nature">
        <title>The complete DNA sequence of yeast chromosome III.</title>
        <authorList>
            <person name="Oliver S.G."/>
            <person name="van der Aart Q.J.M."/>
            <person name="Agostoni-Carbone M.L."/>
            <person name="Aigle M."/>
            <person name="Alberghina L."/>
            <person name="Alexandraki D."/>
            <person name="Antoine G."/>
            <person name="Anwar R."/>
            <person name="Ballesta J.P.G."/>
            <person name="Benit P."/>
            <person name="Berben G."/>
            <person name="Bergantino E."/>
            <person name="Biteau N."/>
            <person name="Bolle P.-A."/>
            <person name="Bolotin-Fukuhara M."/>
            <person name="Brown A."/>
            <person name="Brown A.J.P."/>
            <person name="Buhler J.-M."/>
            <person name="Carcano C."/>
            <person name="Carignani G."/>
            <person name="Cederberg H."/>
            <person name="Chanet R."/>
            <person name="Contreras R."/>
            <person name="Crouzet M."/>
            <person name="Daignan-Fornier B."/>
            <person name="Defoor E."/>
            <person name="Delgado M.D."/>
            <person name="Demolder J."/>
            <person name="Doira C."/>
            <person name="Dubois E."/>
            <person name="Dujon B."/>
            <person name="Duesterhoeft A."/>
            <person name="Erdmann D."/>
            <person name="Esteban M."/>
            <person name="Fabre F."/>
            <person name="Fairhead C."/>
            <person name="Faye G."/>
            <person name="Feldmann H."/>
            <person name="Fiers W."/>
            <person name="Francingues-Gaillard M.-C."/>
            <person name="Franco L."/>
            <person name="Frontali L."/>
            <person name="Fukuhara H."/>
            <person name="Fuller L.J."/>
            <person name="Galland P."/>
            <person name="Gent M.E."/>
            <person name="Gigot D."/>
            <person name="Gilliquet V."/>
            <person name="Glansdorff N."/>
            <person name="Goffeau A."/>
            <person name="Grenson M."/>
            <person name="Grisanti P."/>
            <person name="Grivell L.A."/>
            <person name="de Haan M."/>
            <person name="Haasemann M."/>
            <person name="Hatat D."/>
            <person name="Hoenicka J."/>
            <person name="Hegemann J.H."/>
            <person name="Herbert C.J."/>
            <person name="Hilger F."/>
            <person name="Hohmann S."/>
            <person name="Hollenberg C.P."/>
            <person name="Huse K."/>
            <person name="Iborra F."/>
            <person name="Indge K.J."/>
            <person name="Isono K."/>
            <person name="Jacq C."/>
            <person name="Jacquet M."/>
            <person name="James C.M."/>
            <person name="Jauniaux J.-C."/>
            <person name="Jia Y."/>
            <person name="Jimenez A."/>
            <person name="Kelly A."/>
            <person name="Kleinhans U."/>
            <person name="Kreisl P."/>
            <person name="Lanfranchi G."/>
            <person name="Lewis C."/>
            <person name="van der Linden C.G."/>
            <person name="Lucchini G."/>
            <person name="Lutzenkirchen K."/>
            <person name="Maat M.J."/>
            <person name="Mallet L."/>
            <person name="Mannhaupt G."/>
            <person name="Martegani E."/>
            <person name="Mathieu A."/>
            <person name="Maurer C.T.C."/>
            <person name="McConnell D."/>
            <person name="McKee R.A."/>
            <person name="Messenguy F."/>
            <person name="Mewes H.-W."/>
            <person name="Molemans F."/>
            <person name="Montague M.A."/>
            <person name="Muzi Falconi M."/>
            <person name="Navas L."/>
            <person name="Newlon C.S."/>
            <person name="Noone D."/>
            <person name="Pallier C."/>
            <person name="Panzeri L."/>
            <person name="Pearson B.M."/>
            <person name="Perea J."/>
            <person name="Philippsen P."/>
            <person name="Pierard A."/>
            <person name="Planta R.J."/>
            <person name="Plevani P."/>
            <person name="Poetsch B."/>
            <person name="Pohl F.M."/>
            <person name="Purnelle B."/>
            <person name="Ramezani Rad M."/>
            <person name="Rasmussen S.W."/>
            <person name="Raynal A."/>
            <person name="Remacha M.A."/>
            <person name="Richterich P."/>
            <person name="Roberts A.B."/>
            <person name="Rodriguez F."/>
            <person name="Sanz E."/>
            <person name="Schaaff-Gerstenschlaeger I."/>
            <person name="Scherens B."/>
            <person name="Schweitzer B."/>
            <person name="Shu Y."/>
            <person name="Skala J."/>
            <person name="Slonimski P.P."/>
            <person name="Sor F."/>
            <person name="Soustelle C."/>
            <person name="Spiegelberg R."/>
            <person name="Stateva L.I."/>
            <person name="Steensma H.Y."/>
            <person name="Steiner S."/>
            <person name="Thierry A."/>
            <person name="Thireos G."/>
            <person name="Tzermia M."/>
            <person name="Urrestarazu L.A."/>
            <person name="Valle G."/>
            <person name="Vetter I."/>
            <person name="van Vliet-Reedijk J.C."/>
            <person name="Voet M."/>
            <person name="Volckaert G."/>
            <person name="Vreken P."/>
            <person name="Wang H."/>
            <person name="Warmington J.R."/>
            <person name="von Wettstein D."/>
            <person name="Wicksteed B.L."/>
            <person name="Wilson C."/>
            <person name="Wurst H."/>
            <person name="Xu G."/>
            <person name="Yoshikawa A."/>
            <person name="Zimmermann F.K."/>
            <person name="Sgouros J.G."/>
        </authorList>
    </citation>
    <scope>NUCLEOTIDE SEQUENCE [LARGE SCALE GENOMIC DNA]</scope>
    <source>
        <strain>ATCC 204508 / S288c</strain>
    </source>
</reference>
<reference key="2">
    <citation type="journal article" date="2014" name="G3 (Bethesda)">
        <title>The reference genome sequence of Saccharomyces cerevisiae: Then and now.</title>
        <authorList>
            <person name="Engel S.R."/>
            <person name="Dietrich F.S."/>
            <person name="Fisk D.G."/>
            <person name="Binkley G."/>
            <person name="Balakrishnan R."/>
            <person name="Costanzo M.C."/>
            <person name="Dwight S.S."/>
            <person name="Hitz B.C."/>
            <person name="Karra K."/>
            <person name="Nash R.S."/>
            <person name="Weng S."/>
            <person name="Wong E.D."/>
            <person name="Lloyd P."/>
            <person name="Skrzypek M.S."/>
            <person name="Miyasato S.R."/>
            <person name="Simison M."/>
            <person name="Cherry J.M."/>
        </authorList>
    </citation>
    <scope>GENOME REANNOTATION</scope>
    <source>
        <strain>ATCC 204508 / S288c</strain>
    </source>
</reference>
<reference key="3">
    <citation type="journal article" date="2007" name="Genome Res.">
        <title>Approaching a complete repository of sequence-verified protein-encoding clones for Saccharomyces cerevisiae.</title>
        <authorList>
            <person name="Hu Y."/>
            <person name="Rolfs A."/>
            <person name="Bhullar B."/>
            <person name="Murthy T.V.S."/>
            <person name="Zhu C."/>
            <person name="Berger M.F."/>
            <person name="Camargo A.A."/>
            <person name="Kelley F."/>
            <person name="McCarron S."/>
            <person name="Jepson D."/>
            <person name="Richardson A."/>
            <person name="Raphael J."/>
            <person name="Moreira D."/>
            <person name="Taycher E."/>
            <person name="Zuo D."/>
            <person name="Mohr S."/>
            <person name="Kane M.F."/>
            <person name="Williamson J."/>
            <person name="Simpson A.J.G."/>
            <person name="Bulyk M.L."/>
            <person name="Harlow E."/>
            <person name="Marsischky G."/>
            <person name="Kolodner R.D."/>
            <person name="LaBaer J."/>
        </authorList>
    </citation>
    <scope>NUCLEOTIDE SEQUENCE [GENOMIC DNA]</scope>
    <source>
        <strain>ATCC 204508 / S288c</strain>
    </source>
</reference>
<reference key="4">
    <citation type="journal article" date="1996" name="Science">
        <title>Sterol esterification in yeast: a two-gene process.</title>
        <authorList>
            <person name="Yang H."/>
            <person name="Bard M."/>
            <person name="Bruner D.A."/>
            <person name="Gleeson A."/>
            <person name="Deckelbaum R.J."/>
            <person name="Aljinovic G."/>
            <person name="Pohl T.M."/>
            <person name="Rothstein R."/>
            <person name="Sturley S.L."/>
        </authorList>
    </citation>
    <scope>FUNCTION</scope>
</reference>
<reference key="5">
    <citation type="journal article" date="2000" name="Eur. J. Biochem.">
        <title>Contribution of Are1p and Are2p to steryl ester synthesis in the yeast Saccharomyces cerevisiae.</title>
        <authorList>
            <person name="Zweytick D."/>
            <person name="Leitner E."/>
            <person name="Kohlwein S.D."/>
            <person name="Yu C."/>
            <person name="Rothblatt J."/>
            <person name="Daum G."/>
        </authorList>
    </citation>
    <scope>FUNCTION</scope>
    <scope>CATALYTIC ACTIVITY</scope>
    <scope>SUBCELLULAR LOCATION</scope>
</reference>
<reference key="6">
    <citation type="journal article" date="2007" name="J. Proteome Res.">
        <title>Large-scale phosphorylation analysis of alpha-factor-arrested Saccharomyces cerevisiae.</title>
        <authorList>
            <person name="Li X."/>
            <person name="Gerber S.A."/>
            <person name="Rudner A.D."/>
            <person name="Beausoleil S.A."/>
            <person name="Haas W."/>
            <person name="Villen J."/>
            <person name="Elias J.E."/>
            <person name="Gygi S.P."/>
        </authorList>
    </citation>
    <scope>PHOSPHORYLATION [LARGE SCALE ANALYSIS] AT SER-45</scope>
    <scope>IDENTIFICATION BY MASS SPECTROMETRY [LARGE SCALE ANALYSIS]</scope>
    <source>
        <strain>ADR376</strain>
    </source>
</reference>
<reference key="7">
    <citation type="journal article" date="2007" name="Proc. Natl. Acad. Sci. U.S.A.">
        <title>Analysis of phosphorylation sites on proteins from Saccharomyces cerevisiae by electron transfer dissociation (ETD) mass spectrometry.</title>
        <authorList>
            <person name="Chi A."/>
            <person name="Huttenhower C."/>
            <person name="Geer L.Y."/>
            <person name="Coon J.J."/>
            <person name="Syka J.E.P."/>
            <person name="Bai D.L."/>
            <person name="Shabanowitz J."/>
            <person name="Burke D.J."/>
            <person name="Troyanskaya O.G."/>
            <person name="Hunt D.F."/>
        </authorList>
    </citation>
    <scope>PHOSPHORYLATION [LARGE SCALE ANALYSIS] AT SER-21</scope>
    <scope>IDENTIFICATION BY MASS SPECTROMETRY [LARGE SCALE ANALYSIS]</scope>
</reference>
<reference key="8">
    <citation type="journal article" date="2008" name="Mol. Cell. Proteomics">
        <title>A multidimensional chromatography technology for in-depth phosphoproteome analysis.</title>
        <authorList>
            <person name="Albuquerque C.P."/>
            <person name="Smolka M.B."/>
            <person name="Payne S.H."/>
            <person name="Bafna V."/>
            <person name="Eng J."/>
            <person name="Zhou H."/>
        </authorList>
    </citation>
    <scope>PHOSPHORYLATION [LARGE SCALE ANALYSIS] AT SER-45</scope>
    <scope>IDENTIFICATION BY MASS SPECTROMETRY [LARGE SCALE ANALYSIS]</scope>
</reference>
<reference key="9">
    <citation type="journal article" date="2009" name="Science">
        <title>Global analysis of Cdk1 substrate phosphorylation sites provides insights into evolution.</title>
        <authorList>
            <person name="Holt L.J."/>
            <person name="Tuch B.B."/>
            <person name="Villen J."/>
            <person name="Johnson A.D."/>
            <person name="Gygi S.P."/>
            <person name="Morgan D.O."/>
        </authorList>
    </citation>
    <scope>PHOSPHORYLATION [LARGE SCALE ANALYSIS] AT SER-45</scope>
    <scope>IDENTIFICATION BY MASS SPECTROMETRY [LARGE SCALE ANALYSIS]</scope>
</reference>
<gene>
    <name evidence="6" type="primary">ARE1</name>
    <name type="synonym">SAT2</name>
    <name type="ordered locus">YCR048W</name>
    <name type="ORF">YCR48W</name>
</gene>
<name>ARE1_YEAST</name>
<proteinExistence type="evidence at protein level"/>
<dbReference type="EC" id="2.3.1.-" evidence="4"/>
<dbReference type="EMBL" id="X59720">
    <property type="protein sequence ID" value="CAA42296.1"/>
    <property type="molecule type" value="Genomic_DNA"/>
</dbReference>
<dbReference type="EMBL" id="AY692921">
    <property type="protein sequence ID" value="AAT92940.1"/>
    <property type="molecule type" value="Genomic_DNA"/>
</dbReference>
<dbReference type="EMBL" id="BK006937">
    <property type="protein sequence ID" value="DAA07526.1"/>
    <property type="molecule type" value="Genomic_DNA"/>
</dbReference>
<dbReference type="PIR" id="S19461">
    <property type="entry name" value="S19461"/>
</dbReference>
<dbReference type="RefSeq" id="NP_009978.1">
    <property type="nucleotide sequence ID" value="NM_001178762.1"/>
</dbReference>
<dbReference type="SMR" id="P25628"/>
<dbReference type="BioGRID" id="31030">
    <property type="interactions" value="168"/>
</dbReference>
<dbReference type="DIP" id="DIP-4998N"/>
<dbReference type="FunCoup" id="P25628">
    <property type="interactions" value="245"/>
</dbReference>
<dbReference type="IntAct" id="P25628">
    <property type="interactions" value="6"/>
</dbReference>
<dbReference type="MINT" id="P25628"/>
<dbReference type="STRING" id="4932.YCR048W"/>
<dbReference type="SwissLipids" id="SLP:000000706"/>
<dbReference type="SwissLipids" id="SLP:000000709"/>
<dbReference type="iPTMnet" id="P25628"/>
<dbReference type="PaxDb" id="4932-YCR048W"/>
<dbReference type="PeptideAtlas" id="P25628"/>
<dbReference type="TopDownProteomics" id="P25628"/>
<dbReference type="EnsemblFungi" id="YCR048W_mRNA">
    <property type="protein sequence ID" value="YCR048W"/>
    <property type="gene ID" value="YCR048W"/>
</dbReference>
<dbReference type="GeneID" id="850415"/>
<dbReference type="KEGG" id="sce:YCR048W"/>
<dbReference type="AGR" id="SGD:S000000644"/>
<dbReference type="SGD" id="S000000644">
    <property type="gene designation" value="ARE1"/>
</dbReference>
<dbReference type="VEuPathDB" id="FungiDB:YCR048W"/>
<dbReference type="eggNOG" id="KOG0380">
    <property type="taxonomic scope" value="Eukaryota"/>
</dbReference>
<dbReference type="GeneTree" id="ENSGT00950000183081"/>
<dbReference type="HOGENOM" id="CLU_018190_2_1_1"/>
<dbReference type="InParanoid" id="P25628"/>
<dbReference type="OMA" id="WWNCVSF"/>
<dbReference type="OrthoDB" id="10039049at2759"/>
<dbReference type="BioCyc" id="MetaCyc:YCR048W-MONOMER"/>
<dbReference type="BioCyc" id="YEAST:YCR048W-MONOMER"/>
<dbReference type="BioGRID-ORCS" id="850415">
    <property type="hits" value="6 hits in 10 CRISPR screens"/>
</dbReference>
<dbReference type="PRO" id="PR:P25628"/>
<dbReference type="Proteomes" id="UP000002311">
    <property type="component" value="Chromosome III"/>
</dbReference>
<dbReference type="RNAct" id="P25628">
    <property type="molecule type" value="protein"/>
</dbReference>
<dbReference type="GO" id="GO:0005783">
    <property type="term" value="C:endoplasmic reticulum"/>
    <property type="evidence" value="ECO:0000314"/>
    <property type="project" value="SGD"/>
</dbReference>
<dbReference type="GO" id="GO:0005789">
    <property type="term" value="C:endoplasmic reticulum membrane"/>
    <property type="evidence" value="ECO:0000318"/>
    <property type="project" value="GO_Central"/>
</dbReference>
<dbReference type="GO" id="GO:0034737">
    <property type="term" value="F:ergosterol O-acyltransferase activity"/>
    <property type="evidence" value="ECO:0000316"/>
    <property type="project" value="SGD"/>
</dbReference>
<dbReference type="GO" id="GO:0034738">
    <property type="term" value="F:lanosterol O-acyltransferase activity"/>
    <property type="evidence" value="ECO:0000315"/>
    <property type="project" value="SGD"/>
</dbReference>
<dbReference type="GO" id="GO:0008204">
    <property type="term" value="P:ergosterol metabolic process"/>
    <property type="evidence" value="ECO:0000318"/>
    <property type="project" value="GO_Central"/>
</dbReference>
<dbReference type="GO" id="GO:0016125">
    <property type="term" value="P:sterol metabolic process"/>
    <property type="evidence" value="ECO:0000315"/>
    <property type="project" value="SGD"/>
</dbReference>
<dbReference type="InterPro" id="IPR004299">
    <property type="entry name" value="MBOAT_fam"/>
</dbReference>
<dbReference type="InterPro" id="IPR014371">
    <property type="entry name" value="Oat_ACAT_DAG_ARE"/>
</dbReference>
<dbReference type="PANTHER" id="PTHR10408">
    <property type="entry name" value="STEROL O-ACYLTRANSFERASE"/>
    <property type="match status" value="1"/>
</dbReference>
<dbReference type="PANTHER" id="PTHR10408:SF23">
    <property type="entry name" value="STEROL O-ACYLTRANSFERASE 1-RELATED"/>
    <property type="match status" value="1"/>
</dbReference>
<dbReference type="Pfam" id="PF03062">
    <property type="entry name" value="MBOAT"/>
    <property type="match status" value="1"/>
</dbReference>
<dbReference type="PIRSF" id="PIRSF000439">
    <property type="entry name" value="Oat_ACAT_DAG_ARE"/>
    <property type="match status" value="1"/>
</dbReference>